<feature type="chain" id="PRO_0000456856" description="Prenyltransferase criF">
    <location>
        <begin position="1"/>
        <end position="408"/>
    </location>
</feature>
<feature type="binding site" evidence="5">
    <location>
        <position position="94"/>
    </location>
    <ligand>
        <name>dimethylallyl diphosphate</name>
        <dbReference type="ChEBI" id="CHEBI:57623"/>
    </ligand>
</feature>
<feature type="binding site" evidence="5">
    <location>
        <position position="181"/>
    </location>
    <ligand>
        <name>dimethylallyl diphosphate</name>
        <dbReference type="ChEBI" id="CHEBI:57623"/>
    </ligand>
</feature>
<feature type="binding site" evidence="5">
    <location>
        <position position="183"/>
    </location>
    <ligand>
        <name>dimethylallyl diphosphate</name>
        <dbReference type="ChEBI" id="CHEBI:57623"/>
    </ligand>
</feature>
<feature type="binding site" evidence="5">
    <location>
        <position position="248"/>
    </location>
    <ligand>
        <name>dimethylallyl diphosphate</name>
        <dbReference type="ChEBI" id="CHEBI:57623"/>
    </ligand>
</feature>
<feature type="binding site" evidence="5">
    <location>
        <position position="250"/>
    </location>
    <ligand>
        <name>dimethylallyl diphosphate</name>
        <dbReference type="ChEBI" id="CHEBI:57623"/>
    </ligand>
</feature>
<feature type="binding site" evidence="5">
    <location>
        <position position="252"/>
    </location>
    <ligand>
        <name>dimethylallyl diphosphate</name>
        <dbReference type="ChEBI" id="CHEBI:57623"/>
    </ligand>
</feature>
<feature type="binding site" evidence="5">
    <location>
        <position position="334"/>
    </location>
    <ligand>
        <name>dimethylallyl diphosphate</name>
        <dbReference type="ChEBI" id="CHEBI:57623"/>
    </ligand>
</feature>
<feature type="binding site" evidence="5">
    <location>
        <position position="336"/>
    </location>
    <ligand>
        <name>dimethylallyl diphosphate</name>
        <dbReference type="ChEBI" id="CHEBI:57623"/>
    </ligand>
</feature>
<feature type="binding site" evidence="5">
    <location>
        <position position="400"/>
    </location>
    <ligand>
        <name>dimethylallyl diphosphate</name>
        <dbReference type="ChEBI" id="CHEBI:57623"/>
    </ligand>
</feature>
<feature type="binding site" evidence="5">
    <location>
        <position position="404"/>
    </location>
    <ligand>
        <name>dimethylallyl diphosphate</name>
        <dbReference type="ChEBI" id="CHEBI:57623"/>
    </ligand>
</feature>
<accession>A0A1E3B0S1</accession>
<dbReference type="EC" id="2.5.1.-" evidence="2"/>
<dbReference type="EMBL" id="JXNT01000024">
    <property type="protein sequence ID" value="ODM14524.1"/>
    <property type="molecule type" value="Genomic_DNA"/>
</dbReference>
<dbReference type="SMR" id="A0A1E3B0S1"/>
<dbReference type="STRING" id="573508.A0A1E3B0S1"/>
<dbReference type="VEuPathDB" id="FungiDB:SI65_10010"/>
<dbReference type="OrthoDB" id="5392033at2759"/>
<dbReference type="Proteomes" id="UP000094569">
    <property type="component" value="Unassembled WGS sequence"/>
</dbReference>
<dbReference type="GO" id="GO:0004659">
    <property type="term" value="F:prenyltransferase activity"/>
    <property type="evidence" value="ECO:0007669"/>
    <property type="project" value="UniProtKB-KW"/>
</dbReference>
<dbReference type="GO" id="GO:0009820">
    <property type="term" value="P:alkaloid metabolic process"/>
    <property type="evidence" value="ECO:0007669"/>
    <property type="project" value="InterPro"/>
</dbReference>
<dbReference type="CDD" id="cd13929">
    <property type="entry name" value="PT-DMATS_CymD"/>
    <property type="match status" value="1"/>
</dbReference>
<dbReference type="InterPro" id="IPR033964">
    <property type="entry name" value="Aro_prenylTrfase"/>
</dbReference>
<dbReference type="InterPro" id="IPR017795">
    <property type="entry name" value="Aro_prenylTrfase_DMATS"/>
</dbReference>
<dbReference type="InterPro" id="IPR012148">
    <property type="entry name" value="DMATS-type_fun"/>
</dbReference>
<dbReference type="NCBIfam" id="TIGR03429">
    <property type="entry name" value="arom_pren_DMATS"/>
    <property type="match status" value="1"/>
</dbReference>
<dbReference type="PANTHER" id="PTHR40627">
    <property type="entry name" value="INDOLE PRENYLTRANSFERASE TDIB-RELATED"/>
    <property type="match status" value="1"/>
</dbReference>
<dbReference type="PANTHER" id="PTHR40627:SF3">
    <property type="entry name" value="PRENYLTRANSFERASE ASQH2-RELATED"/>
    <property type="match status" value="1"/>
</dbReference>
<dbReference type="Pfam" id="PF11991">
    <property type="entry name" value="Trp_DMAT"/>
    <property type="match status" value="1"/>
</dbReference>
<dbReference type="PIRSF" id="PIRSF000509">
    <property type="entry name" value="Trp_DMAT"/>
    <property type="match status" value="1"/>
</dbReference>
<dbReference type="SFLD" id="SFLDS00036">
    <property type="entry name" value="Aromatic_Prenyltransferase"/>
    <property type="match status" value="1"/>
</dbReference>
<dbReference type="SFLD" id="SFLDG01162">
    <property type="entry name" value="I"/>
    <property type="match status" value="1"/>
</dbReference>
<organism>
    <name type="scientific">Aspergillus cristatus</name>
    <name type="common">Chinese Fuzhuan brick tea-fermentation fungus</name>
    <name type="synonym">Eurotium cristatum</name>
    <dbReference type="NCBI Taxonomy" id="573508"/>
    <lineage>
        <taxon>Eukaryota</taxon>
        <taxon>Fungi</taxon>
        <taxon>Dikarya</taxon>
        <taxon>Ascomycota</taxon>
        <taxon>Pezizomycotina</taxon>
        <taxon>Eurotiomycetes</taxon>
        <taxon>Eurotiomycetidae</taxon>
        <taxon>Eurotiales</taxon>
        <taxon>Aspergillaceae</taxon>
        <taxon>Aspergillus</taxon>
        <taxon>Aspergillus subgen. Aspergillus</taxon>
    </lineage>
</organism>
<keyword id="KW-0637">Prenyltransferase</keyword>
<keyword id="KW-1185">Reference proteome</keyword>
<keyword id="KW-0808">Transferase</keyword>
<proteinExistence type="inferred from homology"/>
<evidence type="ECO:0000250" key="1">
    <source>
        <dbReference type="UniProtKB" id="A0A017SP50"/>
    </source>
</evidence>
<evidence type="ECO:0000250" key="2">
    <source>
        <dbReference type="UniProtKB" id="A0A017SPL2"/>
    </source>
</evidence>
<evidence type="ECO:0000250" key="3">
    <source>
        <dbReference type="UniProtKB" id="A0A017SR40"/>
    </source>
</evidence>
<evidence type="ECO:0000250" key="4">
    <source>
        <dbReference type="UniProtKB" id="A0A2D1VNM2"/>
    </source>
</evidence>
<evidence type="ECO:0000250" key="5">
    <source>
        <dbReference type="UniProtKB" id="Q50EL0"/>
    </source>
</evidence>
<evidence type="ECO:0000269" key="6">
    <source>
    </source>
</evidence>
<evidence type="ECO:0000303" key="7">
    <source>
    </source>
</evidence>
<evidence type="ECO:0000305" key="8"/>
<sequence>MQPFHTLSRILPFPDATQKAWWDKLAPMLLKAMQAQGYDTEAQYAQLGMVYKCVLPYLGQYPTVENDATRWKSFLCPYGIPIEPSLNISQGILRYAFEPIGPDVGTDKDPQNMNVIQDCLKGLTDHDDRIDTTLYAQFASRLLLTKEESQRVAATGQFTFKPGQGMHGYAVDMKGSQPMVKGYFCVGIKSAVTGIPTGKLMLDAVREVDTEGRITEPLDKLEDYYGNALGNLRLCFMSVDMIDPQDARTKLYGLQQEVSFEGLEDLWTLGGRINTPTNQEGLQLLRELWDLLQIPPGVRDIEVDHCSVGQPPKYLLPSLVNWTFLPGHSDPMPQVYLVPFGLPDAHISDALVTFFERRGWTDLARSYKSNLASYFPDVDFSQSRHVQEAISFSFRKGKPYLSVYMSLF</sequence>
<protein>
    <recommendedName>
        <fullName evidence="7">Prenyltransferase criF</fullName>
        <ecNumber evidence="2">2.5.1.-</ecNumber>
    </recommendedName>
    <alternativeName>
        <fullName evidence="7">Echinulin biosynthesis cluster protein F</fullName>
    </alternativeName>
</protein>
<gene>
    <name evidence="7" type="primary">criF</name>
    <name type="ORF">SI65_10010</name>
</gene>
<name>CRIF_ASPCR</name>
<reference key="1">
    <citation type="journal article" date="2016" name="BMC Genomics">
        <title>Comparative genomic and transcriptomic analyses of the Fuzhuan brick tea-fermentation fungus Aspergillus cristatus.</title>
        <authorList>
            <person name="Ge Y."/>
            <person name="Wang Y."/>
            <person name="Liu Y."/>
            <person name="Tan Y."/>
            <person name="Ren X."/>
            <person name="Zhang X."/>
            <person name="Hyde K.D."/>
            <person name="Liu Y."/>
            <person name="Liu Z."/>
        </authorList>
    </citation>
    <scope>NUCLEOTIDE SEQUENCE [LARGE SCALE GENOMIC DNA]</scope>
    <source>
        <strain>GZAAS20.1005</strain>
    </source>
</reference>
<reference key="2">
    <citation type="journal article" date="2022" name="Microb. Cell Fact.">
        <title>Efficient production of a cyclic dipeptide (cyclo-TA) using heterologous expression system of filamentous fungus Aspergillus oryzae.</title>
        <authorList>
            <person name="Qi J."/>
            <person name="Han H."/>
            <person name="Sui D."/>
            <person name="Tan S."/>
            <person name="Liu C."/>
            <person name="Wang P."/>
            <person name="Xie C."/>
            <person name="Xia X."/>
            <person name="Gao J.M."/>
            <person name="Liu C."/>
        </authorList>
    </citation>
    <scope>FUNCTION</scope>
</reference>
<comment type="function">
    <text evidence="1 3 4 6">Prenyltransferase; part of the gene cluster that mediates the biosynthesis of echinulin family alkaloid (PubMed:35843946). The pathway begins with the biosynthesis of the cyclic dipeptide cyclo-L-Trp-L-Ala (cyclo-TA) by the NRPS criC via condensation of L-alanine and L-tryptophan (PubMed:35843946). The prenyltransferase criA then catalyzes the first prenylation step, a reverse prenylation reaction at C2, to yield preechinulin (By similarity). Preechinulin is the substrate of the cytochrome P450 monooxygenase criE that catalyzes the formation of the double bond between C10 and C11 to produce neoechulin A (By similarity). The unique prenyltransferase criF functions as a competitive enzyme with criE for preechinulin metabolization and uses preechinulin for effective regiospecific prenylations. Preechinulin is prenylated by criF at C5 or C7. C7-prenylation leads to accumulation of tardioxopiperazine B without further modification by criF. In contrast, the C5-prenylated tardioxopiperazine A can be prenylated again by criF, predominantly at C7 to form echinulin or less frequently at C4 to give variecolorin L. CriF also accepts neoechilunin A to produce varlecolorin G (prenylation at C5) or isoechinulin A (prenylation at C7). CriF further converts isoechinulin A into dehydroechinulin. Moreover, a yet unidentified enzyme can also convert neoechilunin A into neoechilunin B by introducing a double bond between positions C14 and C17 and thus provides a further substrate to criF for C5 and C7 prenylation (By similarity).</text>
</comment>
<comment type="catalytic activity">
    <reaction evidence="2">
        <text>preechinulin + dimethylallyl diphosphate = tardioxopiperazine B + diphosphate</text>
        <dbReference type="Rhea" id="RHEA:73775"/>
        <dbReference type="ChEBI" id="CHEBI:33019"/>
        <dbReference type="ChEBI" id="CHEBI:57623"/>
        <dbReference type="ChEBI" id="CHEBI:193003"/>
        <dbReference type="ChEBI" id="CHEBI:193006"/>
    </reaction>
    <physiologicalReaction direction="left-to-right" evidence="2">
        <dbReference type="Rhea" id="RHEA:73776"/>
    </physiologicalReaction>
</comment>
<comment type="catalytic activity">
    <reaction evidence="2">
        <text>preechinulin + dimethylallyl diphosphate = tardioxopiperazine A + diphosphate</text>
        <dbReference type="Rhea" id="RHEA:73779"/>
        <dbReference type="ChEBI" id="CHEBI:33019"/>
        <dbReference type="ChEBI" id="CHEBI:57623"/>
        <dbReference type="ChEBI" id="CHEBI:193003"/>
        <dbReference type="ChEBI" id="CHEBI:193007"/>
    </reaction>
    <physiologicalReaction direction="left-to-right" evidence="2">
        <dbReference type="Rhea" id="RHEA:73780"/>
    </physiologicalReaction>
</comment>
<comment type="catalytic activity">
    <reaction evidence="2">
        <text>tardioxopiperazine A + dimethylallyl diphosphate = echinulin + diphosphate</text>
        <dbReference type="Rhea" id="RHEA:73783"/>
        <dbReference type="ChEBI" id="CHEBI:33019"/>
        <dbReference type="ChEBI" id="CHEBI:57623"/>
        <dbReference type="ChEBI" id="CHEBI:68193"/>
        <dbReference type="ChEBI" id="CHEBI:193007"/>
    </reaction>
    <physiologicalReaction direction="left-to-right" evidence="2">
        <dbReference type="Rhea" id="RHEA:73784"/>
    </physiologicalReaction>
</comment>
<comment type="catalytic activity">
    <reaction evidence="2">
        <text>tardioxopiperazine A + dimethylallyl diphosphate = variecolorin L + diphosphate</text>
        <dbReference type="Rhea" id="RHEA:73787"/>
        <dbReference type="ChEBI" id="CHEBI:33019"/>
        <dbReference type="ChEBI" id="CHEBI:57623"/>
        <dbReference type="ChEBI" id="CHEBI:193007"/>
        <dbReference type="ChEBI" id="CHEBI:193008"/>
    </reaction>
    <physiologicalReaction direction="left-to-right" evidence="2">
        <dbReference type="Rhea" id="RHEA:73788"/>
    </physiologicalReaction>
</comment>
<comment type="catalytic activity">
    <reaction evidence="2">
        <text>neoechinulin A + dimethylallyl diphosphate = variecolorin G + diphosphate</text>
        <dbReference type="Rhea" id="RHEA:73791"/>
        <dbReference type="ChEBI" id="CHEBI:33019"/>
        <dbReference type="ChEBI" id="CHEBI:57623"/>
        <dbReference type="ChEBI" id="CHEBI:193004"/>
        <dbReference type="ChEBI" id="CHEBI:193009"/>
    </reaction>
    <physiologicalReaction direction="left-to-right" evidence="2">
        <dbReference type="Rhea" id="RHEA:73792"/>
    </physiologicalReaction>
</comment>
<comment type="catalytic activity">
    <reaction evidence="2">
        <text>neoechinulin A + dimethylallyl diphosphate = isoechinulin A + diphosphate</text>
        <dbReference type="Rhea" id="RHEA:73795"/>
        <dbReference type="ChEBI" id="CHEBI:33019"/>
        <dbReference type="ChEBI" id="CHEBI:57623"/>
        <dbReference type="ChEBI" id="CHEBI:193004"/>
        <dbReference type="ChEBI" id="CHEBI:193010"/>
    </reaction>
    <physiologicalReaction direction="left-to-right" evidence="2">
        <dbReference type="Rhea" id="RHEA:73796"/>
    </physiologicalReaction>
</comment>
<comment type="catalytic activity">
    <reaction evidence="2">
        <text>isoechinulin A + dimethylallyl diphosphate = dehydroechinulin + diphosphate</text>
        <dbReference type="Rhea" id="RHEA:73799"/>
        <dbReference type="ChEBI" id="CHEBI:33019"/>
        <dbReference type="ChEBI" id="CHEBI:57623"/>
        <dbReference type="ChEBI" id="CHEBI:193010"/>
        <dbReference type="ChEBI" id="CHEBI:193011"/>
    </reaction>
    <physiologicalReaction direction="left-to-right" evidence="2">
        <dbReference type="Rhea" id="RHEA:73800"/>
    </physiologicalReaction>
</comment>
<comment type="catalytic activity">
    <reaction evidence="2">
        <text>neoechinulin B + dimethylallyl diphosphate = isoechinulin B + diphosphate</text>
        <dbReference type="Rhea" id="RHEA:73803"/>
        <dbReference type="ChEBI" id="CHEBI:33019"/>
        <dbReference type="ChEBI" id="CHEBI:57623"/>
        <dbReference type="ChEBI" id="CHEBI:193005"/>
        <dbReference type="ChEBI" id="CHEBI:193026"/>
    </reaction>
    <physiologicalReaction direction="left-to-right" evidence="2">
        <dbReference type="Rhea" id="RHEA:73804"/>
    </physiologicalReaction>
</comment>
<comment type="pathway">
    <text evidence="4">Secondary metabolite biosynthesis.</text>
</comment>
<comment type="pathway">
    <text evidence="4">Alkaloid biosynthesis.</text>
</comment>
<comment type="subunit">
    <text evidence="5">Homodimer.</text>
</comment>
<comment type="similarity">
    <text evidence="8">Belongs to the tryptophan dimethylallyltransferase family.</text>
</comment>